<dbReference type="EC" id="2.1.2.11" evidence="1"/>
<dbReference type="EMBL" id="BA000021">
    <property type="protein sequence ID" value="BAC24595.1"/>
    <property type="molecule type" value="Genomic_DNA"/>
</dbReference>
<dbReference type="SMR" id="Q8D2A5"/>
<dbReference type="STRING" id="36870.gene:10368952"/>
<dbReference type="KEGG" id="wbr:panB"/>
<dbReference type="eggNOG" id="COG0413">
    <property type="taxonomic scope" value="Bacteria"/>
</dbReference>
<dbReference type="HOGENOM" id="CLU_036645_1_0_6"/>
<dbReference type="OrthoDB" id="9781789at2"/>
<dbReference type="UniPathway" id="UPA00028">
    <property type="reaction ID" value="UER00003"/>
</dbReference>
<dbReference type="Proteomes" id="UP000000562">
    <property type="component" value="Chromosome"/>
</dbReference>
<dbReference type="GO" id="GO:0005737">
    <property type="term" value="C:cytoplasm"/>
    <property type="evidence" value="ECO:0007669"/>
    <property type="project" value="UniProtKB-SubCell"/>
</dbReference>
<dbReference type="GO" id="GO:0003864">
    <property type="term" value="F:3-methyl-2-oxobutanoate hydroxymethyltransferase activity"/>
    <property type="evidence" value="ECO:0007669"/>
    <property type="project" value="UniProtKB-UniRule"/>
</dbReference>
<dbReference type="GO" id="GO:0000287">
    <property type="term" value="F:magnesium ion binding"/>
    <property type="evidence" value="ECO:0007669"/>
    <property type="project" value="TreeGrafter"/>
</dbReference>
<dbReference type="GO" id="GO:0015940">
    <property type="term" value="P:pantothenate biosynthetic process"/>
    <property type="evidence" value="ECO:0007669"/>
    <property type="project" value="UniProtKB-UniRule"/>
</dbReference>
<dbReference type="CDD" id="cd06557">
    <property type="entry name" value="KPHMT-like"/>
    <property type="match status" value="1"/>
</dbReference>
<dbReference type="FunFam" id="3.20.20.60:FF:000003">
    <property type="entry name" value="3-methyl-2-oxobutanoate hydroxymethyltransferase"/>
    <property type="match status" value="1"/>
</dbReference>
<dbReference type="Gene3D" id="3.20.20.60">
    <property type="entry name" value="Phosphoenolpyruvate-binding domains"/>
    <property type="match status" value="1"/>
</dbReference>
<dbReference type="HAMAP" id="MF_00156">
    <property type="entry name" value="PanB"/>
    <property type="match status" value="1"/>
</dbReference>
<dbReference type="InterPro" id="IPR003700">
    <property type="entry name" value="Pantoate_hydroxy_MeTrfase"/>
</dbReference>
<dbReference type="InterPro" id="IPR015813">
    <property type="entry name" value="Pyrv/PenolPyrv_kinase-like_dom"/>
</dbReference>
<dbReference type="InterPro" id="IPR040442">
    <property type="entry name" value="Pyrv_kinase-like_dom_sf"/>
</dbReference>
<dbReference type="NCBIfam" id="TIGR00222">
    <property type="entry name" value="panB"/>
    <property type="match status" value="1"/>
</dbReference>
<dbReference type="NCBIfam" id="NF001452">
    <property type="entry name" value="PRK00311.1"/>
    <property type="match status" value="1"/>
</dbReference>
<dbReference type="PANTHER" id="PTHR20881">
    <property type="entry name" value="3-METHYL-2-OXOBUTANOATE HYDROXYMETHYLTRANSFERASE"/>
    <property type="match status" value="1"/>
</dbReference>
<dbReference type="PANTHER" id="PTHR20881:SF0">
    <property type="entry name" value="3-METHYL-2-OXOBUTANOATE HYDROXYMETHYLTRANSFERASE"/>
    <property type="match status" value="1"/>
</dbReference>
<dbReference type="Pfam" id="PF02548">
    <property type="entry name" value="Pantoate_transf"/>
    <property type="match status" value="1"/>
</dbReference>
<dbReference type="PIRSF" id="PIRSF000388">
    <property type="entry name" value="Pantoate_hydroxy_MeTrfase"/>
    <property type="match status" value="1"/>
</dbReference>
<dbReference type="SUPFAM" id="SSF51621">
    <property type="entry name" value="Phosphoenolpyruvate/pyruvate domain"/>
    <property type="match status" value="1"/>
</dbReference>
<protein>
    <recommendedName>
        <fullName evidence="1">3-methyl-2-oxobutanoate hydroxymethyltransferase</fullName>
        <ecNumber evidence="1">2.1.2.11</ecNumber>
    </recommendedName>
    <alternativeName>
        <fullName evidence="1">Ketopantoate hydroxymethyltransferase</fullName>
        <shortName evidence="1">KPHMT</shortName>
    </alternativeName>
</protein>
<comment type="function">
    <text evidence="1">Catalyzes the reversible reaction in which hydroxymethyl group from 5,10-methylenetetrahydrofolate is transferred onto alpha-ketoisovalerate to form ketopantoate.</text>
</comment>
<comment type="catalytic activity">
    <reaction evidence="1">
        <text>3-methyl-2-oxobutanoate + (6R)-5,10-methylene-5,6,7,8-tetrahydrofolate + H2O = 2-dehydropantoate + (6S)-5,6,7,8-tetrahydrofolate</text>
        <dbReference type="Rhea" id="RHEA:11824"/>
        <dbReference type="ChEBI" id="CHEBI:11561"/>
        <dbReference type="ChEBI" id="CHEBI:11851"/>
        <dbReference type="ChEBI" id="CHEBI:15377"/>
        <dbReference type="ChEBI" id="CHEBI:15636"/>
        <dbReference type="ChEBI" id="CHEBI:57453"/>
        <dbReference type="EC" id="2.1.2.11"/>
    </reaction>
</comment>
<comment type="cofactor">
    <cofactor evidence="1">
        <name>Mg(2+)</name>
        <dbReference type="ChEBI" id="CHEBI:18420"/>
    </cofactor>
    <text evidence="1">Binds 1 Mg(2+) ion per subunit.</text>
</comment>
<comment type="pathway">
    <text evidence="1">Cofactor biosynthesis; (R)-pantothenate biosynthesis; (R)-pantoate from 3-methyl-2-oxobutanoate: step 1/2.</text>
</comment>
<comment type="subunit">
    <text evidence="1">Homodecamer; pentamer of dimers.</text>
</comment>
<comment type="subcellular location">
    <subcellularLocation>
        <location evidence="1">Cytoplasm</location>
    </subcellularLocation>
</comment>
<comment type="similarity">
    <text evidence="1">Belongs to the PanB family.</text>
</comment>
<organism>
    <name type="scientific">Wigglesworthia glossinidia brevipalpis</name>
    <dbReference type="NCBI Taxonomy" id="36870"/>
    <lineage>
        <taxon>Bacteria</taxon>
        <taxon>Pseudomonadati</taxon>
        <taxon>Pseudomonadota</taxon>
        <taxon>Gammaproteobacteria</taxon>
        <taxon>Enterobacterales</taxon>
        <taxon>Erwiniaceae</taxon>
        <taxon>Wigglesworthia</taxon>
    </lineage>
</organism>
<proteinExistence type="inferred from homology"/>
<gene>
    <name evidence="1" type="primary">panB</name>
    <name type="ordered locus">WIGBR4490</name>
</gene>
<name>PANB_WIGBR</name>
<sequence>MKKTNIYDLYKLKEQNKKFASITAYDATFANLFFKKGIRTILVGDSLGMTIQGHSSTVPVKIDEMMYHTKCVRRGAPSCLIISDLPFMSYNNINDALNNSKKLIQSGANIVKLEGGLWVSDIIHELNTRSIPVCGHIGLTPQSINMQGSYKIQGRNNNDAIRLMEEAISIEESGAKLLVLECIIQKLSNNITKKLNIPTIGIGSGKKTDGQILVMQDVLGITIEGKIPSFSKNFTKNKFGIEKAIELYIEEVENELFPSENHSFN</sequence>
<keyword id="KW-0963">Cytoplasm</keyword>
<keyword id="KW-0460">Magnesium</keyword>
<keyword id="KW-0479">Metal-binding</keyword>
<keyword id="KW-0566">Pantothenate biosynthesis</keyword>
<keyword id="KW-1185">Reference proteome</keyword>
<keyword id="KW-0808">Transferase</keyword>
<feature type="chain" id="PRO_0000184907" description="3-methyl-2-oxobutanoate hydroxymethyltransferase">
    <location>
        <begin position="1"/>
        <end position="265"/>
    </location>
</feature>
<feature type="active site" description="Proton acceptor" evidence="1">
    <location>
        <position position="181"/>
    </location>
</feature>
<feature type="binding site" evidence="1">
    <location>
        <begin position="45"/>
        <end position="46"/>
    </location>
    <ligand>
        <name>3-methyl-2-oxobutanoate</name>
        <dbReference type="ChEBI" id="CHEBI:11851"/>
    </ligand>
</feature>
<feature type="binding site" evidence="1">
    <location>
        <position position="45"/>
    </location>
    <ligand>
        <name>Mg(2+)</name>
        <dbReference type="ChEBI" id="CHEBI:18420"/>
    </ligand>
</feature>
<feature type="binding site" evidence="1">
    <location>
        <position position="84"/>
    </location>
    <ligand>
        <name>3-methyl-2-oxobutanoate</name>
        <dbReference type="ChEBI" id="CHEBI:11851"/>
    </ligand>
</feature>
<feature type="binding site" evidence="1">
    <location>
        <position position="84"/>
    </location>
    <ligand>
        <name>Mg(2+)</name>
        <dbReference type="ChEBI" id="CHEBI:18420"/>
    </ligand>
</feature>
<feature type="binding site" evidence="1">
    <location>
        <position position="112"/>
    </location>
    <ligand>
        <name>3-methyl-2-oxobutanoate</name>
        <dbReference type="ChEBI" id="CHEBI:11851"/>
    </ligand>
</feature>
<feature type="binding site" evidence="1">
    <location>
        <position position="114"/>
    </location>
    <ligand>
        <name>Mg(2+)</name>
        <dbReference type="ChEBI" id="CHEBI:18420"/>
    </ligand>
</feature>
<reference key="1">
    <citation type="journal article" date="2002" name="Nat. Genet.">
        <title>Genome sequence of the endocellular obligate symbiont of tsetse flies, Wigglesworthia glossinidia.</title>
        <authorList>
            <person name="Akman L."/>
            <person name="Yamashita A."/>
            <person name="Watanabe H."/>
            <person name="Oshima K."/>
            <person name="Shiba T."/>
            <person name="Hattori M."/>
            <person name="Aksoy S."/>
        </authorList>
    </citation>
    <scope>NUCLEOTIDE SEQUENCE [LARGE SCALE GENOMIC DNA]</scope>
</reference>
<accession>Q8D2A5</accession>
<evidence type="ECO:0000255" key="1">
    <source>
        <dbReference type="HAMAP-Rule" id="MF_00156"/>
    </source>
</evidence>